<dbReference type="EMBL" id="AL162751">
    <property type="protein sequence ID" value="CAB83320.1"/>
    <property type="status" value="ALT_SEQ"/>
    <property type="molecule type" value="Genomic_DNA"/>
</dbReference>
<dbReference type="EMBL" id="CP002688">
    <property type="protein sequence ID" value="AED90628.1"/>
    <property type="molecule type" value="Genomic_DNA"/>
</dbReference>
<dbReference type="EMBL" id="CP002688">
    <property type="protein sequence ID" value="AED90629.1"/>
    <property type="molecule type" value="Genomic_DNA"/>
</dbReference>
<dbReference type="EMBL" id="BX832179">
    <property type="status" value="NOT_ANNOTATED_CDS"/>
    <property type="molecule type" value="mRNA"/>
</dbReference>
<dbReference type="PIR" id="T48385">
    <property type="entry name" value="T48385"/>
</dbReference>
<dbReference type="RefSeq" id="NP_001190217.1">
    <property type="nucleotide sequence ID" value="NM_001203288.1"/>
</dbReference>
<dbReference type="RefSeq" id="NP_195977.2">
    <property type="nucleotide sequence ID" value="NM_120438.4"/>
</dbReference>
<dbReference type="SMR" id="F4KGN5"/>
<dbReference type="BioGRID" id="17063">
    <property type="interactions" value="1"/>
</dbReference>
<dbReference type="FunCoup" id="F4KGN5">
    <property type="interactions" value="98"/>
</dbReference>
<dbReference type="STRING" id="3702.F4KGN5"/>
<dbReference type="PaxDb" id="3702-AT5G03570.2"/>
<dbReference type="EnsemblPlants" id="AT5G03570.1">
    <property type="protein sequence ID" value="AT5G03570.1"/>
    <property type="gene ID" value="AT5G03570"/>
</dbReference>
<dbReference type="EnsemblPlants" id="AT5G03570.2">
    <property type="protein sequence ID" value="AT5G03570.2"/>
    <property type="gene ID" value="AT5G03570"/>
</dbReference>
<dbReference type="GeneID" id="831787"/>
<dbReference type="Gramene" id="AT5G03570.1">
    <property type="protein sequence ID" value="AT5G03570.1"/>
    <property type="gene ID" value="AT5G03570"/>
</dbReference>
<dbReference type="Gramene" id="AT5G03570.2">
    <property type="protein sequence ID" value="AT5G03570.2"/>
    <property type="gene ID" value="AT5G03570"/>
</dbReference>
<dbReference type="KEGG" id="ath:AT5G03570"/>
<dbReference type="Araport" id="AT5G03570"/>
<dbReference type="TAIR" id="AT5G03570">
    <property type="gene designation" value="IREG2"/>
</dbReference>
<dbReference type="eggNOG" id="KOG2601">
    <property type="taxonomic scope" value="Eukaryota"/>
</dbReference>
<dbReference type="HOGENOM" id="CLU_020370_1_0_1"/>
<dbReference type="InParanoid" id="F4KGN5"/>
<dbReference type="OMA" id="YPVFISY"/>
<dbReference type="PRO" id="PR:F4KGN5"/>
<dbReference type="Proteomes" id="UP000006548">
    <property type="component" value="Chromosome 5"/>
</dbReference>
<dbReference type="ExpressionAtlas" id="F4KGN5">
    <property type="expression patterns" value="baseline and differential"/>
</dbReference>
<dbReference type="GO" id="GO:0009705">
    <property type="term" value="C:plant-type vacuole membrane"/>
    <property type="evidence" value="ECO:0000314"/>
    <property type="project" value="UniProtKB"/>
</dbReference>
<dbReference type="GO" id="GO:0015087">
    <property type="term" value="F:cobalt ion transmembrane transporter activity"/>
    <property type="evidence" value="ECO:0000315"/>
    <property type="project" value="TAIR"/>
</dbReference>
<dbReference type="GO" id="GO:0005381">
    <property type="term" value="F:iron ion transmembrane transporter activity"/>
    <property type="evidence" value="ECO:0000315"/>
    <property type="project" value="TAIR"/>
</dbReference>
<dbReference type="GO" id="GO:0010106">
    <property type="term" value="P:cellular response to iron ion starvation"/>
    <property type="evidence" value="ECO:0000315"/>
    <property type="project" value="UniProtKB"/>
</dbReference>
<dbReference type="GO" id="GO:0006824">
    <property type="term" value="P:cobalt ion transport"/>
    <property type="evidence" value="ECO:0000315"/>
    <property type="project" value="TAIR"/>
</dbReference>
<dbReference type="GO" id="GO:0006826">
    <property type="term" value="P:iron ion transport"/>
    <property type="evidence" value="ECO:0000315"/>
    <property type="project" value="TAIR"/>
</dbReference>
<dbReference type="GO" id="GO:0035444">
    <property type="term" value="P:nickel cation transmembrane transport"/>
    <property type="evidence" value="ECO:0000315"/>
    <property type="project" value="UniProtKB"/>
</dbReference>
<dbReference type="GO" id="GO:0015675">
    <property type="term" value="P:nickel cation transport"/>
    <property type="evidence" value="ECO:0000315"/>
    <property type="project" value="TAIR"/>
</dbReference>
<dbReference type="GO" id="GO:0000041">
    <property type="term" value="P:transition metal ion transport"/>
    <property type="evidence" value="ECO:0000315"/>
    <property type="project" value="TAIR"/>
</dbReference>
<dbReference type="CDD" id="cd17480">
    <property type="entry name" value="MFS_SLC40A1_like"/>
    <property type="match status" value="1"/>
</dbReference>
<dbReference type="Gene3D" id="1.20.1250.20">
    <property type="entry name" value="MFS general substrate transporter like domains"/>
    <property type="match status" value="1"/>
</dbReference>
<dbReference type="InterPro" id="IPR009716">
    <property type="entry name" value="Ferroportin-1"/>
</dbReference>
<dbReference type="InterPro" id="IPR036259">
    <property type="entry name" value="MFS_trans_sf"/>
</dbReference>
<dbReference type="PANTHER" id="PTHR11660">
    <property type="entry name" value="SOLUTE CARRIER FAMILY 40 MEMBER"/>
    <property type="match status" value="1"/>
</dbReference>
<dbReference type="PANTHER" id="PTHR11660:SF57">
    <property type="entry name" value="SOLUTE CARRIER FAMILY 40 MEMBER"/>
    <property type="match status" value="1"/>
</dbReference>
<dbReference type="Pfam" id="PF06963">
    <property type="entry name" value="FPN1"/>
    <property type="match status" value="1"/>
</dbReference>
<dbReference type="SUPFAM" id="SSF103473">
    <property type="entry name" value="MFS general substrate transporter"/>
    <property type="match status" value="1"/>
</dbReference>
<proteinExistence type="evidence at transcript level"/>
<comment type="function">
    <text evidence="3">Vacuolar transporter that is involved in the transport of excess nickel into the vacuole under iron deficiency, increasing cellular tolerance to nickel under iron deficiency stress response.</text>
</comment>
<comment type="subcellular location">
    <subcellularLocation>
        <location evidence="5">Vacuole membrane</location>
        <topology evidence="5">Multi-pass membrane protein</topology>
    </subcellularLocation>
    <text>Tonoplast.</text>
</comment>
<comment type="induction">
    <text evidence="3">By iron deficiency in roots.</text>
</comment>
<comment type="disruption phenotype">
    <text evidence="3">No visible phenotype under normal growth conditions, but plants have increased sensitivity to nickel when grown in an iron-deficient environment.</text>
</comment>
<comment type="miscellaneous">
    <text evidence="5">Plants over-expressing IREG2 show increased tolerance to elevated concentrations of nickel.</text>
</comment>
<comment type="similarity">
    <text evidence="4">Belongs to the ferroportin (FP) (TC 2.A.100) family. SLC40A subfamily.</text>
</comment>
<comment type="sequence caution" evidence="4">
    <conflict type="miscellaneous discrepancy">
        <sequence resource="EMBL" id="BX832179"/>
    </conflict>
    <text>Sequencing errors.</text>
</comment>
<comment type="sequence caution" evidence="4">
    <conflict type="erroneous gene model prediction">
        <sequence resource="EMBL-CDS" id="CAB83320"/>
    </conflict>
</comment>
<organism>
    <name type="scientific">Arabidopsis thaliana</name>
    <name type="common">Mouse-ear cress</name>
    <dbReference type="NCBI Taxonomy" id="3702"/>
    <lineage>
        <taxon>Eukaryota</taxon>
        <taxon>Viridiplantae</taxon>
        <taxon>Streptophyta</taxon>
        <taxon>Embryophyta</taxon>
        <taxon>Tracheophyta</taxon>
        <taxon>Spermatophyta</taxon>
        <taxon>Magnoliopsida</taxon>
        <taxon>eudicotyledons</taxon>
        <taxon>Gunneridae</taxon>
        <taxon>Pentapetalae</taxon>
        <taxon>rosids</taxon>
        <taxon>malvids</taxon>
        <taxon>Brassicales</taxon>
        <taxon>Brassicaceae</taxon>
        <taxon>Camelineae</taxon>
        <taxon>Arabidopsis</taxon>
    </lineage>
</organism>
<protein>
    <recommendedName>
        <fullName>Solute carrier family 40 member 2</fullName>
    </recommendedName>
    <alternativeName>
        <fullName>Ferroportin-2</fullName>
    </alternativeName>
    <alternativeName>
        <fullName>Iron-regulated transporter 2</fullName>
        <shortName>AtIREG2</shortName>
    </alternativeName>
</protein>
<name>S40A2_ARATH</name>
<accession>F4KGN5</accession>
<accession>Q9LZC8</accession>
<gene>
    <name type="primary">IREG2</name>
    <name type="synonym">FPN2</name>
    <name type="ordered locus">At5g03570</name>
    <name type="ORF">F12E4.370</name>
</gene>
<evidence type="ECO:0000255" key="1"/>
<evidence type="ECO:0000256" key="2">
    <source>
        <dbReference type="SAM" id="MobiDB-lite"/>
    </source>
</evidence>
<evidence type="ECO:0000269" key="3">
    <source>
    </source>
</evidence>
<evidence type="ECO:0000305" key="4"/>
<evidence type="ECO:0000305" key="5">
    <source>
    </source>
</evidence>
<reference key="1">
    <citation type="journal article" date="2000" name="Nature">
        <title>Sequence and analysis of chromosome 5 of the plant Arabidopsis thaliana.</title>
        <authorList>
            <person name="Tabata S."/>
            <person name="Kaneko T."/>
            <person name="Nakamura Y."/>
            <person name="Kotani H."/>
            <person name="Kato T."/>
            <person name="Asamizu E."/>
            <person name="Miyajima N."/>
            <person name="Sasamoto S."/>
            <person name="Kimura T."/>
            <person name="Hosouchi T."/>
            <person name="Kawashima K."/>
            <person name="Kohara M."/>
            <person name="Matsumoto M."/>
            <person name="Matsuno A."/>
            <person name="Muraki A."/>
            <person name="Nakayama S."/>
            <person name="Nakazaki N."/>
            <person name="Naruo K."/>
            <person name="Okumura S."/>
            <person name="Shinpo S."/>
            <person name="Takeuchi C."/>
            <person name="Wada T."/>
            <person name="Watanabe A."/>
            <person name="Yamada M."/>
            <person name="Yasuda M."/>
            <person name="Sato S."/>
            <person name="de la Bastide M."/>
            <person name="Huang E."/>
            <person name="Spiegel L."/>
            <person name="Gnoj L."/>
            <person name="O'Shaughnessy A."/>
            <person name="Preston R."/>
            <person name="Habermann K."/>
            <person name="Murray J."/>
            <person name="Johnson D."/>
            <person name="Rohlfing T."/>
            <person name="Nelson J."/>
            <person name="Stoneking T."/>
            <person name="Pepin K."/>
            <person name="Spieth J."/>
            <person name="Sekhon M."/>
            <person name="Armstrong J."/>
            <person name="Becker M."/>
            <person name="Belter E."/>
            <person name="Cordum H."/>
            <person name="Cordes M."/>
            <person name="Courtney L."/>
            <person name="Courtney W."/>
            <person name="Dante M."/>
            <person name="Du H."/>
            <person name="Edwards J."/>
            <person name="Fryman J."/>
            <person name="Haakensen B."/>
            <person name="Lamar E."/>
            <person name="Latreille P."/>
            <person name="Leonard S."/>
            <person name="Meyer R."/>
            <person name="Mulvaney E."/>
            <person name="Ozersky P."/>
            <person name="Riley A."/>
            <person name="Strowmatt C."/>
            <person name="Wagner-McPherson C."/>
            <person name="Wollam A."/>
            <person name="Yoakum M."/>
            <person name="Bell M."/>
            <person name="Dedhia N."/>
            <person name="Parnell L."/>
            <person name="Shah R."/>
            <person name="Rodriguez M."/>
            <person name="Hoon See L."/>
            <person name="Vil D."/>
            <person name="Baker J."/>
            <person name="Kirchoff K."/>
            <person name="Toth K."/>
            <person name="King L."/>
            <person name="Bahret A."/>
            <person name="Miller B."/>
            <person name="Marra M.A."/>
            <person name="Martienssen R."/>
            <person name="McCombie W.R."/>
            <person name="Wilson R.K."/>
            <person name="Murphy G."/>
            <person name="Bancroft I."/>
            <person name="Volckaert G."/>
            <person name="Wambutt R."/>
            <person name="Duesterhoeft A."/>
            <person name="Stiekema W."/>
            <person name="Pohl T."/>
            <person name="Entian K.-D."/>
            <person name="Terryn N."/>
            <person name="Hartley N."/>
            <person name="Bent E."/>
            <person name="Johnson S."/>
            <person name="Langham S.-A."/>
            <person name="McCullagh B."/>
            <person name="Robben J."/>
            <person name="Grymonprez B."/>
            <person name="Zimmermann W."/>
            <person name="Ramsperger U."/>
            <person name="Wedler H."/>
            <person name="Balke K."/>
            <person name="Wedler E."/>
            <person name="Peters S."/>
            <person name="van Staveren M."/>
            <person name="Dirkse W."/>
            <person name="Mooijman P."/>
            <person name="Klein Lankhorst R."/>
            <person name="Weitzenegger T."/>
            <person name="Bothe G."/>
            <person name="Rose M."/>
            <person name="Hauf J."/>
            <person name="Berneiser S."/>
            <person name="Hempel S."/>
            <person name="Feldpausch M."/>
            <person name="Lamberth S."/>
            <person name="Villarroel R."/>
            <person name="Gielen J."/>
            <person name="Ardiles W."/>
            <person name="Bents O."/>
            <person name="Lemcke K."/>
            <person name="Kolesov G."/>
            <person name="Mayer K.F.X."/>
            <person name="Rudd S."/>
            <person name="Schoof H."/>
            <person name="Schueller C."/>
            <person name="Zaccaria P."/>
            <person name="Mewes H.-W."/>
            <person name="Bevan M."/>
            <person name="Fransz P.F."/>
        </authorList>
    </citation>
    <scope>NUCLEOTIDE SEQUENCE [LARGE SCALE GENOMIC DNA]</scope>
    <source>
        <strain>cv. Columbia</strain>
    </source>
</reference>
<reference key="2">
    <citation type="journal article" date="2017" name="Plant J.">
        <title>Araport11: a complete reannotation of the Arabidopsis thaliana reference genome.</title>
        <authorList>
            <person name="Cheng C.Y."/>
            <person name="Krishnakumar V."/>
            <person name="Chan A.P."/>
            <person name="Thibaud-Nissen F."/>
            <person name="Schobel S."/>
            <person name="Town C.D."/>
        </authorList>
    </citation>
    <scope>GENOME REANNOTATION</scope>
    <source>
        <strain>cv. Columbia</strain>
    </source>
</reference>
<reference key="3">
    <citation type="journal article" date="2004" name="Genome Res.">
        <title>Whole genome sequence comparisons and 'full-length' cDNA sequences: a combined approach to evaluate and improve Arabidopsis genome annotation.</title>
        <authorList>
            <person name="Castelli V."/>
            <person name="Aury J.-M."/>
            <person name="Jaillon O."/>
            <person name="Wincker P."/>
            <person name="Clepet C."/>
            <person name="Menard M."/>
            <person name="Cruaud C."/>
            <person name="Quetier F."/>
            <person name="Scarpelli C."/>
            <person name="Schaechter V."/>
            <person name="Temple G."/>
            <person name="Caboche M."/>
            <person name="Weissenbach J."/>
            <person name="Salanoubat M."/>
        </authorList>
    </citation>
    <scope>NUCLEOTIDE SEQUENCE [LARGE SCALE MRNA]</scope>
    <source>
        <strain>cv. Columbia</strain>
    </source>
</reference>
<reference key="4">
    <citation type="journal article" date="2006" name="J. Biol. Chem.">
        <title>AtIREG2 encodes a tonoplast transport protein involved in iron-dependent nickel detoxification in Arabidopsis thaliana roots.</title>
        <authorList>
            <person name="Schaaf G."/>
            <person name="Honsbein A."/>
            <person name="Meda A.R."/>
            <person name="Kirchner S."/>
            <person name="Wipf D."/>
            <person name="von Wiren N."/>
        </authorList>
    </citation>
    <scope>FUNCTION</scope>
    <scope>SUBCELLULAR LOCATION</scope>
    <scope>INDUCTION</scope>
    <scope>DISRUPTION PHENOTYPE</scope>
</reference>
<sequence>MEEETETRVFLSNEQHQEEEEEEEEEPSLPRSMVISLYLGYFLARWGARTWEFSVALYMIYLWPNSLFLTAMYGVVESGSATLFGPIVGQMIDGMSYVKVLRLWLVTQNLSFIVAGGAVVALLVVPDLKSQNFPVFATLVVLTNLSGAIGVLSTLAGTVLIERDWVVVMSEGHSPAVLTRMNSVIRGIDLSSKLLSPVITGLIISFVSLRASAITFAAWATITVWIEYWLFISVYNGVPAIVQSDERRSLRSSQSQAEETDSASSFYVPLLHEEESYRNTQSRSRILRILERISESSFVSAWRNYLNQEIVLPGVSLALLFFTVLSFGTLMTATLEWKGIPTYIIGIGRGISAGVGLAATVLYPLMQSRISPLRTGVWSFWSQWTCLLVCVGSIWVEKEKIASYMLMAGVAASRLGLWMFDLAVIQQMQDLVPESDRCVVGGVQNSLQSALDLMANLLGIIVSNPKDFWMLTLISFATVSLAGILYTIHLYRIRKHLFHLEKIPLLNNFFAS</sequence>
<keyword id="KW-0406">Ion transport</keyword>
<keyword id="KW-0472">Membrane</keyword>
<keyword id="KW-0533">Nickel</keyword>
<keyword id="KW-0921">Nickel transport</keyword>
<keyword id="KW-1185">Reference proteome</keyword>
<keyword id="KW-0346">Stress response</keyword>
<keyword id="KW-0812">Transmembrane</keyword>
<keyword id="KW-1133">Transmembrane helix</keyword>
<keyword id="KW-0813">Transport</keyword>
<keyword id="KW-0926">Vacuole</keyword>
<feature type="chain" id="PRO_0000415899" description="Solute carrier family 40 member 2">
    <location>
        <begin position="1"/>
        <end position="512"/>
    </location>
</feature>
<feature type="transmembrane region" description="Helical" evidence="1">
    <location>
        <begin position="55"/>
        <end position="75"/>
    </location>
</feature>
<feature type="transmembrane region" description="Helical" evidence="1">
    <location>
        <begin position="105"/>
        <end position="125"/>
    </location>
</feature>
<feature type="transmembrane region" description="Helical" evidence="1">
    <location>
        <begin position="133"/>
        <end position="153"/>
    </location>
</feature>
<feature type="transmembrane region" description="Helical" evidence="1">
    <location>
        <begin position="187"/>
        <end position="207"/>
    </location>
</feature>
<feature type="transmembrane region" description="Helical" evidence="1">
    <location>
        <begin position="214"/>
        <end position="234"/>
    </location>
</feature>
<feature type="transmembrane region" description="Helical" evidence="1">
    <location>
        <begin position="310"/>
        <end position="330"/>
    </location>
</feature>
<feature type="transmembrane region" description="Helical" evidence="1">
    <location>
        <begin position="343"/>
        <end position="363"/>
    </location>
</feature>
<feature type="transmembrane region" description="Helical" evidence="1">
    <location>
        <begin position="376"/>
        <end position="396"/>
    </location>
</feature>
<feature type="transmembrane region" description="Helical" evidence="1">
    <location>
        <begin position="405"/>
        <end position="425"/>
    </location>
</feature>
<feature type="transmembrane region" description="Helical" evidence="1">
    <location>
        <begin position="442"/>
        <end position="462"/>
    </location>
</feature>
<feature type="transmembrane region" description="Helical" evidence="1">
    <location>
        <begin position="468"/>
        <end position="488"/>
    </location>
</feature>
<feature type="region of interest" description="Disordered" evidence="2">
    <location>
        <begin position="1"/>
        <end position="28"/>
    </location>
</feature>
<feature type="compositionally biased region" description="Acidic residues" evidence="2">
    <location>
        <begin position="17"/>
        <end position="27"/>
    </location>
</feature>